<comment type="function">
    <text evidence="3">Conotoxin with small effects on sodium (Nav), potassium (Kv) and calcium (Cav) currents. At high concentration (10 uM), it has no effects on the peak sodium currents, but induces a ~10 mV shift in a polarizing direction in the current-voltage relationship. At the same concentration, it increases 19% of the peak potassium currents but does not induce a shift in the current-voltage relationship. At the same concentration, it inhibits 31% of the peak calcium currents but does not induce a shift in the current-voltage relationship. On rat DRG neurons, it inhibits calcium channel currents with an IC(50)=19.28 uM. Moreover, at 10 uM, it inhibits 15.32% of the human Cav1.2/CACNA1C currents and 12.86% of the human Cav2.2/CACNA1B currents.</text>
</comment>
<comment type="subcellular location">
    <subcellularLocation>
        <location evidence="6">Secreted</location>
    </subcellularLocation>
</comment>
<comment type="tissue specificity">
    <text evidence="6">Expressed by the venom duct.</text>
</comment>
<comment type="domain">
    <text evidence="5">The cysteine framework is III (CC-C-C-CC). Classified in the M-4 branch, since 4 residues stand between the fourth and the fifth cysteine residues.</text>
</comment>
<comment type="similarity">
    <text evidence="5">Belongs to the conotoxin M superfamily.</text>
</comment>
<organism>
    <name type="scientific">Conus varius</name>
    <name type="common">Varius cone</name>
    <dbReference type="NCBI Taxonomy" id="89448"/>
    <lineage>
        <taxon>Eukaryota</taxon>
        <taxon>Metazoa</taxon>
        <taxon>Spiralia</taxon>
        <taxon>Lophotrochozoa</taxon>
        <taxon>Mollusca</taxon>
        <taxon>Gastropoda</taxon>
        <taxon>Caenogastropoda</taxon>
        <taxon>Neogastropoda</taxon>
        <taxon>Conoidea</taxon>
        <taxon>Conidae</taxon>
        <taxon>Conus</taxon>
        <taxon>Strategoconus</taxon>
    </lineage>
</organism>
<feature type="signal peptide" evidence="2">
    <location>
        <begin position="1"/>
        <end position="24"/>
    </location>
</feature>
<feature type="propeptide" id="PRO_0000455039" evidence="7">
    <location>
        <begin position="25"/>
        <end position="52"/>
    </location>
</feature>
<feature type="peptide" id="PRO_5003559842" description="Conotoxin Vr3a" evidence="7">
    <location>
        <begin position="53"/>
        <end position="73"/>
    </location>
</feature>
<feature type="modified residue" description="4-hydroxyproline; partial" evidence="1">
    <location>
        <position position="57"/>
    </location>
</feature>
<feature type="modified residue" description="4-hydroxyproline; partial" evidence="1">
    <location>
        <position position="58"/>
    </location>
</feature>
<feature type="modified residue" description="4-hydroxyproline" evidence="1">
    <location>
        <position position="68"/>
    </location>
</feature>
<feature type="disulfide bond" evidence="1">
    <location>
        <begin position="55"/>
        <end position="66"/>
    </location>
</feature>
<feature type="disulfide bond" evidence="1">
    <location>
        <begin position="56"/>
        <end position="71"/>
    </location>
</feature>
<feature type="disulfide bond" evidence="1">
    <location>
        <begin position="61"/>
        <end position="72"/>
    </location>
</feature>
<reference evidence="8" key="1">
    <citation type="journal article" date="2013" name="Toxicon">
        <title>Characterizing the evolution and functions of the M-superfamily conotoxins.</title>
        <authorList>
            <person name="Zhou M."/>
            <person name="Wang L."/>
            <person name="Wu Y."/>
            <person name="Zhu X."/>
            <person name="Feng Y."/>
            <person name="Chen Z."/>
            <person name="Li Y."/>
            <person name="Sun D."/>
            <person name="Ren Z."/>
            <person name="Xu A."/>
        </authorList>
    </citation>
    <scope>NUCLEOTIDE SEQUENCE [MRNA]</scope>
    <source>
        <tissue>Venom duct</tissue>
    </source>
</reference>
<reference key="2">
    <citation type="journal article" date="2021" name="J. Venom. Anim. Toxins Incl. Trop. Dis.">
        <title>A novel proline-rich M-superfamily conotoxin that can simultaneously affect sodium, potassium and calcium currents.</title>
        <authorList>
            <person name="Yang M."/>
            <person name="Li Y."/>
            <person name="Liu L."/>
            <person name="Zhou M."/>
        </authorList>
    </citation>
    <scope>FUNCTION</scope>
    <scope>SYNTHESIS OF 53-73</scope>
</reference>
<proteinExistence type="inferred from homology"/>
<dbReference type="EMBL" id="JF510712">
    <property type="protein sequence ID" value="AEX60199.1"/>
    <property type="molecule type" value="mRNA"/>
</dbReference>
<dbReference type="GO" id="GO:0005576">
    <property type="term" value="C:extracellular region"/>
    <property type="evidence" value="ECO:0007669"/>
    <property type="project" value="UniProtKB-SubCell"/>
</dbReference>
<dbReference type="GO" id="GO:0008200">
    <property type="term" value="F:ion channel inhibitor activity"/>
    <property type="evidence" value="ECO:0007669"/>
    <property type="project" value="InterPro"/>
</dbReference>
<dbReference type="GO" id="GO:0090729">
    <property type="term" value="F:toxin activity"/>
    <property type="evidence" value="ECO:0007669"/>
    <property type="project" value="UniProtKB-KW"/>
</dbReference>
<dbReference type="InterPro" id="IPR004214">
    <property type="entry name" value="Conotoxin"/>
</dbReference>
<dbReference type="Pfam" id="PF02950">
    <property type="entry name" value="Conotoxin"/>
    <property type="match status" value="1"/>
</dbReference>
<name>CM3A_CONVA</name>
<sequence>MLKMGVVLFTVLVLFPLATLHLDAEQPVERYAENKQDINPDQRSGFLTFALRQGCCPPGVCQMAACNPPPCCP</sequence>
<accession>H2BK78</accession>
<protein>
    <recommendedName>
        <fullName evidence="4">Conotoxin Vr3a</fullName>
    </recommendedName>
    <alternativeName>
        <fullName evidence="8">Vr3-NPPP01</fullName>
    </alternativeName>
</protein>
<keyword id="KW-1015">Disulfide bond</keyword>
<keyword id="KW-0379">Hydroxylation</keyword>
<keyword id="KW-0872">Ion channel impairing toxin</keyword>
<keyword id="KW-0964">Secreted</keyword>
<keyword id="KW-0732">Signal</keyword>
<keyword id="KW-0800">Toxin</keyword>
<evidence type="ECO:0000250" key="1">
    <source>
        <dbReference type="UniProtKB" id="P01523"/>
    </source>
</evidence>
<evidence type="ECO:0000255" key="2"/>
<evidence type="ECO:0000269" key="3">
    <source>
    </source>
</evidence>
<evidence type="ECO:0000303" key="4">
    <source>
    </source>
</evidence>
<evidence type="ECO:0000305" key="5"/>
<evidence type="ECO:0000305" key="6">
    <source>
    </source>
</evidence>
<evidence type="ECO:0000305" key="7">
    <source>
    </source>
</evidence>
<evidence type="ECO:0000312" key="8">
    <source>
        <dbReference type="EMBL" id="AEX60199.1"/>
    </source>
</evidence>